<keyword id="KW-1185">Reference proteome</keyword>
<keyword id="KW-0687">Ribonucleoprotein</keyword>
<keyword id="KW-0689">Ribosomal protein</keyword>
<proteinExistence type="inferred from homology"/>
<feature type="chain" id="PRO_1000121625" description="Large ribosomal subunit protein bL28">
    <location>
        <begin position="1"/>
        <end position="78"/>
    </location>
</feature>
<evidence type="ECO:0000255" key="1">
    <source>
        <dbReference type="HAMAP-Rule" id="MF_00373"/>
    </source>
</evidence>
<evidence type="ECO:0000305" key="2"/>
<protein>
    <recommendedName>
        <fullName evidence="1">Large ribosomal subunit protein bL28</fullName>
    </recommendedName>
    <alternativeName>
        <fullName evidence="2">50S ribosomal protein L28</fullName>
    </alternativeName>
</protein>
<gene>
    <name evidence="1" type="primary">rpmB</name>
    <name type="ordered locus">ECS88_4051</name>
</gene>
<dbReference type="EMBL" id="CU928161">
    <property type="protein sequence ID" value="CAR05260.1"/>
    <property type="molecule type" value="Genomic_DNA"/>
</dbReference>
<dbReference type="RefSeq" id="WP_000091955.1">
    <property type="nucleotide sequence ID" value="NC_011742.1"/>
</dbReference>
<dbReference type="EMDB" id="EMD-7970"/>
<dbReference type="EMDB" id="EMD-8826"/>
<dbReference type="EMDB" id="EMD-8829"/>
<dbReference type="SMR" id="B7MFJ8"/>
<dbReference type="IntAct" id="B7MFJ8">
    <property type="interactions" value="1"/>
</dbReference>
<dbReference type="GeneID" id="93778350"/>
<dbReference type="KEGG" id="ecz:ECS88_4051"/>
<dbReference type="HOGENOM" id="CLU_064548_3_1_6"/>
<dbReference type="Proteomes" id="UP000000747">
    <property type="component" value="Chromosome"/>
</dbReference>
<dbReference type="GO" id="GO:0022625">
    <property type="term" value="C:cytosolic large ribosomal subunit"/>
    <property type="evidence" value="ECO:0007669"/>
    <property type="project" value="TreeGrafter"/>
</dbReference>
<dbReference type="GO" id="GO:0003735">
    <property type="term" value="F:structural constituent of ribosome"/>
    <property type="evidence" value="ECO:0007669"/>
    <property type="project" value="InterPro"/>
</dbReference>
<dbReference type="GO" id="GO:0006412">
    <property type="term" value="P:translation"/>
    <property type="evidence" value="ECO:0007669"/>
    <property type="project" value="UniProtKB-UniRule"/>
</dbReference>
<dbReference type="FunFam" id="2.30.170.40:FF:000001">
    <property type="entry name" value="50S ribosomal protein L28"/>
    <property type="match status" value="1"/>
</dbReference>
<dbReference type="Gene3D" id="2.30.170.40">
    <property type="entry name" value="Ribosomal protein L28/L24"/>
    <property type="match status" value="1"/>
</dbReference>
<dbReference type="HAMAP" id="MF_00373">
    <property type="entry name" value="Ribosomal_bL28"/>
    <property type="match status" value="1"/>
</dbReference>
<dbReference type="InterPro" id="IPR026569">
    <property type="entry name" value="Ribosomal_bL28"/>
</dbReference>
<dbReference type="InterPro" id="IPR034704">
    <property type="entry name" value="Ribosomal_bL28/bL31-like_sf"/>
</dbReference>
<dbReference type="InterPro" id="IPR001383">
    <property type="entry name" value="Ribosomal_bL28_bact-type"/>
</dbReference>
<dbReference type="InterPro" id="IPR037147">
    <property type="entry name" value="Ribosomal_bL28_sf"/>
</dbReference>
<dbReference type="NCBIfam" id="TIGR00009">
    <property type="entry name" value="L28"/>
    <property type="match status" value="1"/>
</dbReference>
<dbReference type="PANTHER" id="PTHR13528">
    <property type="entry name" value="39S RIBOSOMAL PROTEIN L28, MITOCHONDRIAL"/>
    <property type="match status" value="1"/>
</dbReference>
<dbReference type="PANTHER" id="PTHR13528:SF2">
    <property type="entry name" value="LARGE RIBOSOMAL SUBUNIT PROTEIN BL28M"/>
    <property type="match status" value="1"/>
</dbReference>
<dbReference type="Pfam" id="PF00830">
    <property type="entry name" value="Ribosomal_L28"/>
    <property type="match status" value="1"/>
</dbReference>
<dbReference type="SUPFAM" id="SSF143800">
    <property type="entry name" value="L28p-like"/>
    <property type="match status" value="1"/>
</dbReference>
<sequence>MSRVCQVTGKRPVTGNNRSHALNATKRRFLPNLHSHRFWVESEKRFVTLRVSAKGMRVIDKKGIDTVLAELRARGEKY</sequence>
<accession>B7MFJ8</accession>
<name>RL28_ECO45</name>
<reference key="1">
    <citation type="journal article" date="2009" name="PLoS Genet.">
        <title>Organised genome dynamics in the Escherichia coli species results in highly diverse adaptive paths.</title>
        <authorList>
            <person name="Touchon M."/>
            <person name="Hoede C."/>
            <person name="Tenaillon O."/>
            <person name="Barbe V."/>
            <person name="Baeriswyl S."/>
            <person name="Bidet P."/>
            <person name="Bingen E."/>
            <person name="Bonacorsi S."/>
            <person name="Bouchier C."/>
            <person name="Bouvet O."/>
            <person name="Calteau A."/>
            <person name="Chiapello H."/>
            <person name="Clermont O."/>
            <person name="Cruveiller S."/>
            <person name="Danchin A."/>
            <person name="Diard M."/>
            <person name="Dossat C."/>
            <person name="Karoui M.E."/>
            <person name="Frapy E."/>
            <person name="Garry L."/>
            <person name="Ghigo J.M."/>
            <person name="Gilles A.M."/>
            <person name="Johnson J."/>
            <person name="Le Bouguenec C."/>
            <person name="Lescat M."/>
            <person name="Mangenot S."/>
            <person name="Martinez-Jehanne V."/>
            <person name="Matic I."/>
            <person name="Nassif X."/>
            <person name="Oztas S."/>
            <person name="Petit M.A."/>
            <person name="Pichon C."/>
            <person name="Rouy Z."/>
            <person name="Ruf C.S."/>
            <person name="Schneider D."/>
            <person name="Tourret J."/>
            <person name="Vacherie B."/>
            <person name="Vallenet D."/>
            <person name="Medigue C."/>
            <person name="Rocha E.P.C."/>
            <person name="Denamur E."/>
        </authorList>
    </citation>
    <scope>NUCLEOTIDE SEQUENCE [LARGE SCALE GENOMIC DNA]</scope>
    <source>
        <strain>S88 / ExPEC</strain>
    </source>
</reference>
<organism>
    <name type="scientific">Escherichia coli O45:K1 (strain S88 / ExPEC)</name>
    <dbReference type="NCBI Taxonomy" id="585035"/>
    <lineage>
        <taxon>Bacteria</taxon>
        <taxon>Pseudomonadati</taxon>
        <taxon>Pseudomonadota</taxon>
        <taxon>Gammaproteobacteria</taxon>
        <taxon>Enterobacterales</taxon>
        <taxon>Enterobacteriaceae</taxon>
        <taxon>Escherichia</taxon>
    </lineage>
</organism>
<comment type="similarity">
    <text evidence="1">Belongs to the bacterial ribosomal protein bL28 family.</text>
</comment>